<comment type="function">
    <text evidence="1">Binds to actin and affects the structure of the cytoskeleton. At high concentrations, profilin prevents the polymerization of actin, whereas it enhances it at low concentrations. By binding to PIP2, it inhibits the formation of IP3 and DG (By similarity).</text>
</comment>
<comment type="subunit">
    <text>Occurs in many kinds of cells as a complex with monomeric actin in a 1:1 ratio.</text>
</comment>
<comment type="subcellular location">
    <subcellularLocation>
        <location evidence="1">Cytoplasm</location>
        <location evidence="1">Cytoskeleton</location>
    </subcellularLocation>
</comment>
<comment type="allergen">
    <text>Causes an allergic reaction in human.</text>
</comment>
<comment type="similarity">
    <text evidence="2">Belongs to the profilin family.</text>
</comment>
<evidence type="ECO:0000250" key="1"/>
<evidence type="ECO:0000305" key="2"/>
<reference key="1">
    <citation type="submission" date="1997-10" db="EMBL/GenBank/DDBJ databases">
        <title>Analysis of recombinant allergen Par j 3 (profilin) from Parietaria judaica.</title>
        <authorList>
            <person name="Asturias J.A."/>
            <person name="Arilla M.C."/>
            <person name="Gomez-Bayon N."/>
            <person name="Martinez A."/>
            <person name="Martinez J."/>
            <person name="Palacios R."/>
        </authorList>
    </citation>
    <scope>NUCLEOTIDE SEQUENCE [MRNA]</scope>
    <source>
        <tissue>Pollen</tissue>
    </source>
</reference>
<accession>Q9T0M8</accession>
<feature type="initiator methionine" description="Removed" evidence="1">
    <location>
        <position position="1"/>
    </location>
</feature>
<feature type="chain" id="PRO_0000199662" description="Profilin-2">
    <location>
        <begin position="2"/>
        <end position="131"/>
    </location>
</feature>
<dbReference type="EMBL" id="Y15209">
    <property type="protein sequence ID" value="CAB44257.1"/>
    <property type="molecule type" value="mRNA"/>
</dbReference>
<dbReference type="SMR" id="Q9T0M8"/>
<dbReference type="Allergome" id="510">
    <property type="allergen name" value="Par j 3"/>
</dbReference>
<dbReference type="Allergome" id="512">
    <property type="allergen name" value="Par j 3.0102"/>
</dbReference>
<dbReference type="GO" id="GO:0005938">
    <property type="term" value="C:cell cortex"/>
    <property type="evidence" value="ECO:0007669"/>
    <property type="project" value="TreeGrafter"/>
</dbReference>
<dbReference type="GO" id="GO:0005856">
    <property type="term" value="C:cytoskeleton"/>
    <property type="evidence" value="ECO:0007669"/>
    <property type="project" value="UniProtKB-SubCell"/>
</dbReference>
<dbReference type="GO" id="GO:0003785">
    <property type="term" value="F:actin monomer binding"/>
    <property type="evidence" value="ECO:0007669"/>
    <property type="project" value="TreeGrafter"/>
</dbReference>
<dbReference type="CDD" id="cd00148">
    <property type="entry name" value="PROF"/>
    <property type="match status" value="1"/>
</dbReference>
<dbReference type="FunFam" id="3.30.450.30:FF:000001">
    <property type="entry name" value="Profilin"/>
    <property type="match status" value="1"/>
</dbReference>
<dbReference type="Gene3D" id="3.30.450.30">
    <property type="entry name" value="Dynein light chain 2a, cytoplasmic"/>
    <property type="match status" value="1"/>
</dbReference>
<dbReference type="InterPro" id="IPR048278">
    <property type="entry name" value="PFN"/>
</dbReference>
<dbReference type="InterPro" id="IPR005455">
    <property type="entry name" value="PFN_euk"/>
</dbReference>
<dbReference type="InterPro" id="IPR036140">
    <property type="entry name" value="PFN_sf"/>
</dbReference>
<dbReference type="InterPro" id="IPR027310">
    <property type="entry name" value="Profilin_CS"/>
</dbReference>
<dbReference type="PANTHER" id="PTHR11604">
    <property type="entry name" value="PROFILIN"/>
    <property type="match status" value="1"/>
</dbReference>
<dbReference type="PANTHER" id="PTHR11604:SF35">
    <property type="entry name" value="PROFILIN-3"/>
    <property type="match status" value="1"/>
</dbReference>
<dbReference type="Pfam" id="PF00235">
    <property type="entry name" value="Profilin"/>
    <property type="match status" value="1"/>
</dbReference>
<dbReference type="PRINTS" id="PR00392">
    <property type="entry name" value="PROFILIN"/>
</dbReference>
<dbReference type="PRINTS" id="PR01640">
    <property type="entry name" value="PROFILINPLNT"/>
</dbReference>
<dbReference type="SMART" id="SM00392">
    <property type="entry name" value="PROF"/>
    <property type="match status" value="1"/>
</dbReference>
<dbReference type="SUPFAM" id="SSF55770">
    <property type="entry name" value="Profilin (actin-binding protein)"/>
    <property type="match status" value="1"/>
</dbReference>
<dbReference type="PROSITE" id="PS00414">
    <property type="entry name" value="PROFILIN"/>
    <property type="match status" value="1"/>
</dbReference>
<sequence>MSWQAYVDDHLMCDVGDGNTLASAAIIGHDGSVWAQSANFPQLKPEEVTGIMNDFNEGGFLAPTGLFLGGTKYMVIQGESGAVIGKKGSGGATLKKTGQAIVIGIYDEPMTPGQCNLVVERLGDYLLEQGM</sequence>
<keyword id="KW-0009">Actin-binding</keyword>
<keyword id="KW-0020">Allergen</keyword>
<keyword id="KW-0963">Cytoplasm</keyword>
<keyword id="KW-0206">Cytoskeleton</keyword>
<protein>
    <recommendedName>
        <fullName>Profilin-2</fullName>
    </recommendedName>
    <alternativeName>
        <fullName>Pollen allergen Par j 3.0102</fullName>
    </alternativeName>
    <allergenName>Par j 3.0102</allergenName>
</protein>
<gene>
    <name type="primary">PRO2</name>
</gene>
<organism>
    <name type="scientific">Parietaria judaica</name>
    <name type="common">Pellitory-of-the-wall</name>
    <name type="synonym">Parietaria diffusa</name>
    <dbReference type="NCBI Taxonomy" id="33127"/>
    <lineage>
        <taxon>Eukaryota</taxon>
        <taxon>Viridiplantae</taxon>
        <taxon>Streptophyta</taxon>
        <taxon>Embryophyta</taxon>
        <taxon>Tracheophyta</taxon>
        <taxon>Spermatophyta</taxon>
        <taxon>Magnoliopsida</taxon>
        <taxon>eudicotyledons</taxon>
        <taxon>Gunneridae</taxon>
        <taxon>Pentapetalae</taxon>
        <taxon>rosids</taxon>
        <taxon>fabids</taxon>
        <taxon>Rosales</taxon>
        <taxon>Urticaceae</taxon>
        <taxon>Parietaria</taxon>
    </lineage>
</organism>
<proteinExistence type="evidence at protein level"/>
<name>PROF2_PARJU</name>